<feature type="chain" id="PRO_0000398648" description="Polyprenal reductase">
    <location>
        <begin position="1"/>
        <end position="318"/>
    </location>
</feature>
<feature type="topological domain" description="Cytoplasmic" evidence="2">
    <location>
        <begin position="1"/>
        <end position="19"/>
    </location>
</feature>
<feature type="transmembrane region" description="Helical" evidence="2">
    <location>
        <begin position="20"/>
        <end position="40"/>
    </location>
</feature>
<feature type="topological domain" description="Lumenal" evidence="2">
    <location>
        <begin position="41"/>
        <end position="80"/>
    </location>
</feature>
<feature type="transmembrane region" description="Helical" evidence="2">
    <location>
        <begin position="81"/>
        <end position="101"/>
    </location>
</feature>
<feature type="topological domain" description="Cytoplasmic" evidence="2">
    <location>
        <begin position="102"/>
        <end position="119"/>
    </location>
</feature>
<feature type="transmembrane region" description="Helical" evidence="2">
    <location>
        <begin position="120"/>
        <end position="140"/>
    </location>
</feature>
<feature type="topological domain" description="Lumenal" evidence="2">
    <location>
        <begin position="141"/>
        <end position="156"/>
    </location>
</feature>
<feature type="transmembrane region" description="Helical" evidence="2">
    <location>
        <begin position="157"/>
        <end position="177"/>
    </location>
</feature>
<feature type="topological domain" description="Cytoplasmic" evidence="2">
    <location>
        <begin position="178"/>
        <end position="194"/>
    </location>
</feature>
<feature type="transmembrane region" description="Helical" evidence="2">
    <location>
        <begin position="195"/>
        <end position="215"/>
    </location>
</feature>
<feature type="topological domain" description="Lumenal" evidence="2">
    <location>
        <begin position="216"/>
        <end position="265"/>
    </location>
</feature>
<feature type="transmembrane region" description="Helical" evidence="2">
    <location>
        <begin position="266"/>
        <end position="286"/>
    </location>
</feature>
<feature type="topological domain" description="Cytoplasmic" evidence="2">
    <location>
        <begin position="287"/>
        <end position="318"/>
    </location>
</feature>
<comment type="function">
    <text evidence="1">Plays a key role in early steps of protein N-linked glycosylation by being involved in the conversion of polyprenol into dolichol (By similarity). Acts as a polyprenal reductase that mediates the reduction of polyprenal into dolichal in a NADP-dependent mechanism (By similarity). Dolichols are required for the synthesis of dolichol-linked monosaccharides and the oligosaccharide precursor used for N-glycosylation (By similarity). Also able to convert testosterone (T) into 5-alpha-dihydrotestosterone (DHT) (By similarity).</text>
</comment>
<comment type="catalytic activity">
    <reaction evidence="1">
        <text>a di-trans,poly-cis-dolichal + NADP(+) = a di-trans,poly-cis-polyprenal + NADPH + H(+)</text>
        <dbReference type="Rhea" id="RHEA:80727"/>
        <dbReference type="Rhea" id="RHEA-COMP:19536"/>
        <dbReference type="Rhea" id="RHEA-COMP:19537"/>
        <dbReference type="ChEBI" id="CHEBI:15378"/>
        <dbReference type="ChEBI" id="CHEBI:57783"/>
        <dbReference type="ChEBI" id="CHEBI:58349"/>
        <dbReference type="ChEBI" id="CHEBI:231623"/>
        <dbReference type="ChEBI" id="CHEBI:231637"/>
        <dbReference type="EC" id="1.3.1.94"/>
    </reaction>
    <physiologicalReaction direction="right-to-left" evidence="1">
        <dbReference type="Rhea" id="RHEA:80729"/>
    </physiologicalReaction>
</comment>
<comment type="catalytic activity">
    <reaction evidence="1">
        <text>a 3-oxo-5alpha-steroid + NADP(+) = a 3-oxo-Delta(4)-steroid + NADPH + H(+)</text>
        <dbReference type="Rhea" id="RHEA:54384"/>
        <dbReference type="ChEBI" id="CHEBI:13601"/>
        <dbReference type="ChEBI" id="CHEBI:15378"/>
        <dbReference type="ChEBI" id="CHEBI:47909"/>
        <dbReference type="ChEBI" id="CHEBI:57783"/>
        <dbReference type="ChEBI" id="CHEBI:58349"/>
        <dbReference type="EC" id="1.3.1.22"/>
    </reaction>
    <physiologicalReaction direction="right-to-left" evidence="1">
        <dbReference type="Rhea" id="RHEA:54386"/>
    </physiologicalReaction>
</comment>
<comment type="catalytic activity">
    <reaction evidence="1">
        <text>androst-4-ene-3,17-dione + NADPH + H(+) = 5alpha-androstan-3,17-dione + NADP(+)</text>
        <dbReference type="Rhea" id="RHEA:50816"/>
        <dbReference type="ChEBI" id="CHEBI:15378"/>
        <dbReference type="ChEBI" id="CHEBI:15994"/>
        <dbReference type="ChEBI" id="CHEBI:16422"/>
        <dbReference type="ChEBI" id="CHEBI:57783"/>
        <dbReference type="ChEBI" id="CHEBI:58349"/>
    </reaction>
    <physiologicalReaction direction="right-to-left" evidence="1">
        <dbReference type="Rhea" id="RHEA:50818"/>
    </physiologicalReaction>
</comment>
<comment type="catalytic activity">
    <reaction evidence="1">
        <text>17beta-hydroxy-5alpha-androstan-3-one + NADP(+) = testosterone + NADPH + H(+)</text>
        <dbReference type="Rhea" id="RHEA:50820"/>
        <dbReference type="ChEBI" id="CHEBI:15378"/>
        <dbReference type="ChEBI" id="CHEBI:16330"/>
        <dbReference type="ChEBI" id="CHEBI:17347"/>
        <dbReference type="ChEBI" id="CHEBI:57783"/>
        <dbReference type="ChEBI" id="CHEBI:58349"/>
        <dbReference type="EC" id="1.3.1.22"/>
    </reaction>
    <physiologicalReaction direction="right-to-left" evidence="1">
        <dbReference type="Rhea" id="RHEA:50822"/>
    </physiologicalReaction>
</comment>
<comment type="pathway">
    <text evidence="1">Protein modification; protein glycosylation.</text>
</comment>
<comment type="subcellular location">
    <subcellularLocation>
        <location evidence="1">Endoplasmic reticulum membrane</location>
        <topology evidence="1">Multi-pass membrane protein</topology>
    </subcellularLocation>
</comment>
<comment type="similarity">
    <text evidence="3">Belongs to the steroid 5-alpha reductase family. Polyprenal reductase subfamily.</text>
</comment>
<keyword id="KW-0256">Endoplasmic reticulum</keyword>
<keyword id="KW-0443">Lipid metabolism</keyword>
<keyword id="KW-0472">Membrane</keyword>
<keyword id="KW-0521">NADP</keyword>
<keyword id="KW-0560">Oxidoreductase</keyword>
<keyword id="KW-1185">Reference proteome</keyword>
<keyword id="KW-0812">Transmembrane</keyword>
<keyword id="KW-1133">Transmembrane helix</keyword>
<sequence length="318" mass="36775">MAPWAAAQLWALNPLRALWLTLAAAFLLTLLLQLVPPGLLPGCALFQDLIRYGKTKREGQSRPAVCRVFDVPKRYFSHFYIISALWNGFLLWHLTQSVFLGVPFPNWLHGLLRILGASQFQGGELALSAFLVLVFLWLHSLRRLFECFYVSVFSNTVIHIVQYCFGLVYYVLTGLTVLSQVPMDGRNAYVIGKNLLMQARWFHILGMLMFIWSSVHQYKCHVILGNLRKNKAGVVIHCNHRIPFGDWFEYVSSPNYLAELMIYISMAVTFGFHNLTWWLVVTYVFFSQALSAFLSHKFYKSKFVSYPKHRKAFLPFLF</sequence>
<evidence type="ECO:0000250" key="1">
    <source>
        <dbReference type="UniProtKB" id="Q9H8P0"/>
    </source>
</evidence>
<evidence type="ECO:0000255" key="2"/>
<evidence type="ECO:0000305" key="3"/>
<name>SR5A3_AILME</name>
<reference key="1">
    <citation type="journal article" date="2010" name="Nature">
        <title>The sequence and de novo assembly of the giant panda genome.</title>
        <authorList>
            <person name="Li R."/>
            <person name="Fan W."/>
            <person name="Tian G."/>
            <person name="Zhu H."/>
            <person name="He L."/>
            <person name="Cai J."/>
            <person name="Huang Q."/>
            <person name="Cai Q."/>
            <person name="Li B."/>
            <person name="Bai Y."/>
            <person name="Zhang Z."/>
            <person name="Zhang Y."/>
            <person name="Wang W."/>
            <person name="Li J."/>
            <person name="Wei F."/>
            <person name="Li H."/>
            <person name="Jian M."/>
            <person name="Li J."/>
            <person name="Zhang Z."/>
            <person name="Nielsen R."/>
            <person name="Li D."/>
            <person name="Gu W."/>
            <person name="Yang Z."/>
            <person name="Xuan Z."/>
            <person name="Ryder O.A."/>
            <person name="Leung F.C."/>
            <person name="Zhou Y."/>
            <person name="Cao J."/>
            <person name="Sun X."/>
            <person name="Fu Y."/>
            <person name="Fang X."/>
            <person name="Guo X."/>
            <person name="Wang B."/>
            <person name="Hou R."/>
            <person name="Shen F."/>
            <person name="Mu B."/>
            <person name="Ni P."/>
            <person name="Lin R."/>
            <person name="Qian W."/>
            <person name="Wang G."/>
            <person name="Yu C."/>
            <person name="Nie W."/>
            <person name="Wang J."/>
            <person name="Wu Z."/>
            <person name="Liang H."/>
            <person name="Min J."/>
            <person name="Wu Q."/>
            <person name="Cheng S."/>
            <person name="Ruan J."/>
            <person name="Wang M."/>
            <person name="Shi Z."/>
            <person name="Wen M."/>
            <person name="Liu B."/>
            <person name="Ren X."/>
            <person name="Zheng H."/>
            <person name="Dong D."/>
            <person name="Cook K."/>
            <person name="Shan G."/>
            <person name="Zhang H."/>
            <person name="Kosiol C."/>
            <person name="Xie X."/>
            <person name="Lu Z."/>
            <person name="Zheng H."/>
            <person name="Li Y."/>
            <person name="Steiner C.C."/>
            <person name="Lam T.T."/>
            <person name="Lin S."/>
            <person name="Zhang Q."/>
            <person name="Li G."/>
            <person name="Tian J."/>
            <person name="Gong T."/>
            <person name="Liu H."/>
            <person name="Zhang D."/>
            <person name="Fang L."/>
            <person name="Ye C."/>
            <person name="Zhang J."/>
            <person name="Hu W."/>
            <person name="Xu A."/>
            <person name="Ren Y."/>
            <person name="Zhang G."/>
            <person name="Bruford M.W."/>
            <person name="Li Q."/>
            <person name="Ma L."/>
            <person name="Guo Y."/>
            <person name="An N."/>
            <person name="Hu Y."/>
            <person name="Zheng Y."/>
            <person name="Shi Y."/>
            <person name="Li Z."/>
            <person name="Liu Q."/>
            <person name="Chen Y."/>
            <person name="Zhao J."/>
            <person name="Qu N."/>
            <person name="Zhao S."/>
            <person name="Tian F."/>
            <person name="Wang X."/>
            <person name="Wang H."/>
            <person name="Xu L."/>
            <person name="Liu X."/>
            <person name="Vinar T."/>
            <person name="Wang Y."/>
            <person name="Lam T.W."/>
            <person name="Yiu S.M."/>
            <person name="Liu S."/>
            <person name="Zhang H."/>
            <person name="Li D."/>
            <person name="Huang Y."/>
            <person name="Wang X."/>
            <person name="Yang G."/>
            <person name="Jiang Z."/>
            <person name="Wang J."/>
            <person name="Qin N."/>
            <person name="Li L."/>
            <person name="Li J."/>
            <person name="Bolund L."/>
            <person name="Kristiansen K."/>
            <person name="Wong G.K."/>
            <person name="Olson M."/>
            <person name="Zhang X."/>
            <person name="Li S."/>
            <person name="Yang H."/>
            <person name="Wang J."/>
            <person name="Wang J."/>
        </authorList>
    </citation>
    <scope>NUCLEOTIDE SEQUENCE [LARGE SCALE GENOMIC DNA]</scope>
</reference>
<accession>D2HBV9</accession>
<organism>
    <name type="scientific">Ailuropoda melanoleuca</name>
    <name type="common">Giant panda</name>
    <dbReference type="NCBI Taxonomy" id="9646"/>
    <lineage>
        <taxon>Eukaryota</taxon>
        <taxon>Metazoa</taxon>
        <taxon>Chordata</taxon>
        <taxon>Craniata</taxon>
        <taxon>Vertebrata</taxon>
        <taxon>Euteleostomi</taxon>
        <taxon>Mammalia</taxon>
        <taxon>Eutheria</taxon>
        <taxon>Laurasiatheria</taxon>
        <taxon>Carnivora</taxon>
        <taxon>Caniformia</taxon>
        <taxon>Ursidae</taxon>
        <taxon>Ailuropoda</taxon>
    </lineage>
</organism>
<dbReference type="EC" id="1.3.1.94" evidence="1"/>
<dbReference type="EC" id="1.3.1.22" evidence="1"/>
<dbReference type="EMBL" id="GL192668">
    <property type="protein sequence ID" value="EFB15787.1"/>
    <property type="molecule type" value="Genomic_DNA"/>
</dbReference>
<dbReference type="RefSeq" id="XP_002919412.1">
    <property type="nucleotide sequence ID" value="XM_002919366.4"/>
</dbReference>
<dbReference type="SMR" id="D2HBV9"/>
<dbReference type="STRING" id="9646.ENSAMEP00000019466"/>
<dbReference type="Ensembl" id="ENSAMET00000035187.1">
    <property type="protein sequence ID" value="ENSAMEP00000036180.1"/>
    <property type="gene ID" value="ENSAMEG00000031461.1"/>
</dbReference>
<dbReference type="GeneID" id="100463734"/>
<dbReference type="KEGG" id="aml:100463734"/>
<dbReference type="CTD" id="79644"/>
<dbReference type="eggNOG" id="KOG1640">
    <property type="taxonomic scope" value="Eukaryota"/>
</dbReference>
<dbReference type="GeneTree" id="ENSGT00500000044920"/>
<dbReference type="HOGENOM" id="CLU_044409_2_1_1"/>
<dbReference type="InParanoid" id="D2HBV9"/>
<dbReference type="OrthoDB" id="541710at2759"/>
<dbReference type="UniPathway" id="UPA00378"/>
<dbReference type="Proteomes" id="UP000008912">
    <property type="component" value="Unassembled WGS sequence"/>
</dbReference>
<dbReference type="GO" id="GO:0005783">
    <property type="term" value="C:endoplasmic reticulum"/>
    <property type="evidence" value="ECO:0000250"/>
    <property type="project" value="UniProtKB"/>
</dbReference>
<dbReference type="GO" id="GO:0005789">
    <property type="term" value="C:endoplasmic reticulum membrane"/>
    <property type="evidence" value="ECO:0007669"/>
    <property type="project" value="UniProtKB-SubCell"/>
</dbReference>
<dbReference type="GO" id="GO:0047751">
    <property type="term" value="F:3-oxo-5-alpha-steroid 4-dehydrogenase (NADP+) activity"/>
    <property type="evidence" value="ECO:0000250"/>
    <property type="project" value="UniProtKB"/>
</dbReference>
<dbReference type="GO" id="GO:0016628">
    <property type="term" value="F:oxidoreductase activity, acting on the CH-CH group of donors, NAD or NADP as acceptor"/>
    <property type="evidence" value="ECO:0000250"/>
    <property type="project" value="UniProtKB"/>
</dbReference>
<dbReference type="GO" id="GO:0160198">
    <property type="term" value="F:polyprenal reductase activity"/>
    <property type="evidence" value="ECO:0000250"/>
    <property type="project" value="UniProtKB"/>
</dbReference>
<dbReference type="GO" id="GO:0019408">
    <property type="term" value="P:dolichol biosynthetic process"/>
    <property type="evidence" value="ECO:0000250"/>
    <property type="project" value="UniProtKB"/>
</dbReference>
<dbReference type="GO" id="GO:0019348">
    <property type="term" value="P:dolichol metabolic process"/>
    <property type="evidence" value="ECO:0000250"/>
    <property type="project" value="UniProtKB"/>
</dbReference>
<dbReference type="GO" id="GO:0006488">
    <property type="term" value="P:dolichol-linked oligosaccharide biosynthetic process"/>
    <property type="evidence" value="ECO:0000250"/>
    <property type="project" value="UniProtKB"/>
</dbReference>
<dbReference type="GO" id="GO:0016095">
    <property type="term" value="P:polyprenol catabolic process"/>
    <property type="evidence" value="ECO:0000250"/>
    <property type="project" value="UniProtKB"/>
</dbReference>
<dbReference type="FunFam" id="1.20.120.1630:FF:000021">
    <property type="entry name" value="Polyprenol reductase 1"/>
    <property type="match status" value="1"/>
</dbReference>
<dbReference type="Gene3D" id="1.20.120.1630">
    <property type="match status" value="1"/>
</dbReference>
<dbReference type="InterPro" id="IPR001104">
    <property type="entry name" value="3-oxo-5_a-steroid_4-DH_C"/>
</dbReference>
<dbReference type="InterPro" id="IPR039698">
    <property type="entry name" value="Dfg10/SRD5A3"/>
</dbReference>
<dbReference type="PANTHER" id="PTHR14624">
    <property type="entry name" value="DFG10 PROTEIN"/>
    <property type="match status" value="1"/>
</dbReference>
<dbReference type="PANTHER" id="PTHR14624:SF0">
    <property type="entry name" value="POLYPRENOL REDUCTASE"/>
    <property type="match status" value="1"/>
</dbReference>
<dbReference type="Pfam" id="PF02544">
    <property type="entry name" value="Steroid_dh"/>
    <property type="match status" value="1"/>
</dbReference>
<dbReference type="PROSITE" id="PS50244">
    <property type="entry name" value="S5A_REDUCTASE"/>
    <property type="match status" value="1"/>
</dbReference>
<proteinExistence type="inferred from homology"/>
<gene>
    <name type="primary">SRD5A3</name>
    <name type="ORF">PANDA_008038</name>
</gene>
<protein>
    <recommendedName>
        <fullName evidence="3">Polyprenal reductase</fullName>
        <ecNumber evidence="1">1.3.1.94</ecNumber>
    </recommendedName>
    <alternativeName>
        <fullName>3-oxo-5-alpha-steroid 4-dehydrogenase 3</fullName>
        <ecNumber evidence="1">1.3.1.22</ecNumber>
    </alternativeName>
    <alternativeName>
        <fullName>Steroid 5-alpha-reductase 3</fullName>
        <shortName>S5AR 3</shortName>
        <shortName>SR type 3</shortName>
    </alternativeName>
</protein>